<evidence type="ECO:0000255" key="1">
    <source>
        <dbReference type="HAMAP-Rule" id="MF_00300"/>
    </source>
</evidence>
<evidence type="ECO:0000256" key="2">
    <source>
        <dbReference type="SAM" id="MobiDB-lite"/>
    </source>
</evidence>
<protein>
    <recommendedName>
        <fullName evidence="1">Chorismate synthase</fullName>
        <shortName evidence="1">CS</shortName>
        <ecNumber evidence="1">4.2.3.5</ecNumber>
    </recommendedName>
    <alternativeName>
        <fullName evidence="1">5-enolpyruvylshikimate-3-phosphate phospholyase</fullName>
    </alternativeName>
</protein>
<sequence>MSGNTFGKLFTVTTAGESHGPALVAIVDGCPPGLELSLEDLQRDLDRRKPGTSRHTTQRQEPDEVEILSGVFEGRTTGCAIGLLIRNTDQKSKDYSAIKDLFRPAHADYTYHHKYGERDYRGGGRSSARETAMRVAAGAIAKKYLVTQGIIIRGYMSQLGPIEIPFKTWDSVEDNAFFSPDPDKVPELEAYMDQLRRDQDSVGARITVVAEGVKPGLGEPIFDRLDAELAHALMSINAVKGVEIGAGFACVSQRGTEHRDELTPEGFLSNNAGGILGGISSGQPIVAHLALKATSSITTPGRSIDVHGNPVDVITKGRHDPCVGIRATPIAEAMMAIVLMDHLLRNRGQNANVRVSTPVLGQL</sequence>
<accession>C3K084</accession>
<name>AROC_PSEFS</name>
<keyword id="KW-0028">Amino-acid biosynthesis</keyword>
<keyword id="KW-0057">Aromatic amino acid biosynthesis</keyword>
<keyword id="KW-0274">FAD</keyword>
<keyword id="KW-0285">Flavoprotein</keyword>
<keyword id="KW-0288">FMN</keyword>
<keyword id="KW-0456">Lyase</keyword>
<keyword id="KW-0521">NADP</keyword>
<comment type="function">
    <text evidence="1">Catalyzes the anti-1,4-elimination of the C-3 phosphate and the C-6 proR hydrogen from 5-enolpyruvylshikimate-3-phosphate (EPSP) to yield chorismate, which is the branch point compound that serves as the starting substrate for the three terminal pathways of aromatic amino acid biosynthesis. This reaction introduces a second double bond into the aromatic ring system.</text>
</comment>
<comment type="catalytic activity">
    <reaction evidence="1">
        <text>5-O-(1-carboxyvinyl)-3-phosphoshikimate = chorismate + phosphate</text>
        <dbReference type="Rhea" id="RHEA:21020"/>
        <dbReference type="ChEBI" id="CHEBI:29748"/>
        <dbReference type="ChEBI" id="CHEBI:43474"/>
        <dbReference type="ChEBI" id="CHEBI:57701"/>
        <dbReference type="EC" id="4.2.3.5"/>
    </reaction>
</comment>
<comment type="cofactor">
    <cofactor evidence="1">
        <name>FMNH2</name>
        <dbReference type="ChEBI" id="CHEBI:57618"/>
    </cofactor>
    <text evidence="1">Reduced FMN (FMNH(2)).</text>
</comment>
<comment type="pathway">
    <text evidence="1">Metabolic intermediate biosynthesis; chorismate biosynthesis; chorismate from D-erythrose 4-phosphate and phosphoenolpyruvate: step 7/7.</text>
</comment>
<comment type="subunit">
    <text evidence="1">Homotetramer.</text>
</comment>
<comment type="similarity">
    <text evidence="1">Belongs to the chorismate synthase family.</text>
</comment>
<gene>
    <name evidence="1" type="primary">aroC</name>
    <name type="ordered locus">PFLU_4338</name>
</gene>
<feature type="chain" id="PRO_1000204957" description="Chorismate synthase">
    <location>
        <begin position="1"/>
        <end position="363"/>
    </location>
</feature>
<feature type="region of interest" description="Disordered" evidence="2">
    <location>
        <begin position="44"/>
        <end position="63"/>
    </location>
</feature>
<feature type="binding site" evidence="1">
    <location>
        <position position="48"/>
    </location>
    <ligand>
        <name>NADP(+)</name>
        <dbReference type="ChEBI" id="CHEBI:58349"/>
    </ligand>
</feature>
<feature type="binding site" evidence="1">
    <location>
        <position position="54"/>
    </location>
    <ligand>
        <name>NADP(+)</name>
        <dbReference type="ChEBI" id="CHEBI:58349"/>
    </ligand>
</feature>
<feature type="binding site" evidence="1">
    <location>
        <begin position="125"/>
        <end position="127"/>
    </location>
    <ligand>
        <name>FMN</name>
        <dbReference type="ChEBI" id="CHEBI:58210"/>
    </ligand>
</feature>
<feature type="binding site" evidence="1">
    <location>
        <begin position="237"/>
        <end position="238"/>
    </location>
    <ligand>
        <name>FMN</name>
        <dbReference type="ChEBI" id="CHEBI:58210"/>
    </ligand>
</feature>
<feature type="binding site" evidence="1">
    <location>
        <position position="277"/>
    </location>
    <ligand>
        <name>FMN</name>
        <dbReference type="ChEBI" id="CHEBI:58210"/>
    </ligand>
</feature>
<feature type="binding site" evidence="1">
    <location>
        <begin position="292"/>
        <end position="296"/>
    </location>
    <ligand>
        <name>FMN</name>
        <dbReference type="ChEBI" id="CHEBI:58210"/>
    </ligand>
</feature>
<feature type="binding site" evidence="1">
    <location>
        <position position="318"/>
    </location>
    <ligand>
        <name>FMN</name>
        <dbReference type="ChEBI" id="CHEBI:58210"/>
    </ligand>
</feature>
<dbReference type="EC" id="4.2.3.5" evidence="1"/>
<dbReference type="EMBL" id="AM181176">
    <property type="protein sequence ID" value="CAY50945.1"/>
    <property type="molecule type" value="Genomic_DNA"/>
</dbReference>
<dbReference type="RefSeq" id="WP_015885104.1">
    <property type="nucleotide sequence ID" value="NC_012660.1"/>
</dbReference>
<dbReference type="SMR" id="C3K084"/>
<dbReference type="STRING" id="294.SRM1_01804"/>
<dbReference type="PATRIC" id="fig|216595.4.peg.4483"/>
<dbReference type="eggNOG" id="COG0082">
    <property type="taxonomic scope" value="Bacteria"/>
</dbReference>
<dbReference type="HOGENOM" id="CLU_034547_0_2_6"/>
<dbReference type="OrthoDB" id="9771806at2"/>
<dbReference type="UniPathway" id="UPA00053">
    <property type="reaction ID" value="UER00090"/>
</dbReference>
<dbReference type="GO" id="GO:0005829">
    <property type="term" value="C:cytosol"/>
    <property type="evidence" value="ECO:0007669"/>
    <property type="project" value="TreeGrafter"/>
</dbReference>
<dbReference type="GO" id="GO:0004107">
    <property type="term" value="F:chorismate synthase activity"/>
    <property type="evidence" value="ECO:0007669"/>
    <property type="project" value="UniProtKB-UniRule"/>
</dbReference>
<dbReference type="GO" id="GO:0010181">
    <property type="term" value="F:FMN binding"/>
    <property type="evidence" value="ECO:0007669"/>
    <property type="project" value="TreeGrafter"/>
</dbReference>
<dbReference type="GO" id="GO:0008652">
    <property type="term" value="P:amino acid biosynthetic process"/>
    <property type="evidence" value="ECO:0007669"/>
    <property type="project" value="UniProtKB-KW"/>
</dbReference>
<dbReference type="GO" id="GO:0009073">
    <property type="term" value="P:aromatic amino acid family biosynthetic process"/>
    <property type="evidence" value="ECO:0007669"/>
    <property type="project" value="UniProtKB-KW"/>
</dbReference>
<dbReference type="GO" id="GO:0009423">
    <property type="term" value="P:chorismate biosynthetic process"/>
    <property type="evidence" value="ECO:0007669"/>
    <property type="project" value="UniProtKB-UniRule"/>
</dbReference>
<dbReference type="CDD" id="cd07304">
    <property type="entry name" value="Chorismate_synthase"/>
    <property type="match status" value="1"/>
</dbReference>
<dbReference type="FunFam" id="3.60.150.10:FF:000001">
    <property type="entry name" value="Chorismate synthase"/>
    <property type="match status" value="1"/>
</dbReference>
<dbReference type="Gene3D" id="3.60.150.10">
    <property type="entry name" value="Chorismate synthase AroC"/>
    <property type="match status" value="1"/>
</dbReference>
<dbReference type="HAMAP" id="MF_00300">
    <property type="entry name" value="Chorismate_synth"/>
    <property type="match status" value="1"/>
</dbReference>
<dbReference type="InterPro" id="IPR000453">
    <property type="entry name" value="Chorismate_synth"/>
</dbReference>
<dbReference type="InterPro" id="IPR035904">
    <property type="entry name" value="Chorismate_synth_AroC_sf"/>
</dbReference>
<dbReference type="InterPro" id="IPR020541">
    <property type="entry name" value="Chorismate_synthase_CS"/>
</dbReference>
<dbReference type="NCBIfam" id="TIGR00033">
    <property type="entry name" value="aroC"/>
    <property type="match status" value="1"/>
</dbReference>
<dbReference type="NCBIfam" id="NF003793">
    <property type="entry name" value="PRK05382.1"/>
    <property type="match status" value="1"/>
</dbReference>
<dbReference type="PANTHER" id="PTHR21085">
    <property type="entry name" value="CHORISMATE SYNTHASE"/>
    <property type="match status" value="1"/>
</dbReference>
<dbReference type="PANTHER" id="PTHR21085:SF0">
    <property type="entry name" value="CHORISMATE SYNTHASE"/>
    <property type="match status" value="1"/>
</dbReference>
<dbReference type="Pfam" id="PF01264">
    <property type="entry name" value="Chorismate_synt"/>
    <property type="match status" value="1"/>
</dbReference>
<dbReference type="PIRSF" id="PIRSF001456">
    <property type="entry name" value="Chorismate_synth"/>
    <property type="match status" value="1"/>
</dbReference>
<dbReference type="SUPFAM" id="SSF103263">
    <property type="entry name" value="Chorismate synthase, AroC"/>
    <property type="match status" value="1"/>
</dbReference>
<dbReference type="PROSITE" id="PS00787">
    <property type="entry name" value="CHORISMATE_SYNTHASE_1"/>
    <property type="match status" value="1"/>
</dbReference>
<dbReference type="PROSITE" id="PS00788">
    <property type="entry name" value="CHORISMATE_SYNTHASE_2"/>
    <property type="match status" value="1"/>
</dbReference>
<dbReference type="PROSITE" id="PS00789">
    <property type="entry name" value="CHORISMATE_SYNTHASE_3"/>
    <property type="match status" value="1"/>
</dbReference>
<organism>
    <name type="scientific">Pseudomonas fluorescens (strain SBW25)</name>
    <dbReference type="NCBI Taxonomy" id="216595"/>
    <lineage>
        <taxon>Bacteria</taxon>
        <taxon>Pseudomonadati</taxon>
        <taxon>Pseudomonadota</taxon>
        <taxon>Gammaproteobacteria</taxon>
        <taxon>Pseudomonadales</taxon>
        <taxon>Pseudomonadaceae</taxon>
        <taxon>Pseudomonas</taxon>
    </lineage>
</organism>
<reference key="1">
    <citation type="journal article" date="2009" name="Genome Biol.">
        <title>Genomic and genetic analyses of diversity and plant interactions of Pseudomonas fluorescens.</title>
        <authorList>
            <person name="Silby M.W."/>
            <person name="Cerdeno-Tarraga A.M."/>
            <person name="Vernikos G.S."/>
            <person name="Giddens S.R."/>
            <person name="Jackson R.W."/>
            <person name="Preston G.M."/>
            <person name="Zhang X.-X."/>
            <person name="Moon C.D."/>
            <person name="Gehrig S.M."/>
            <person name="Godfrey S.A.C."/>
            <person name="Knight C.G."/>
            <person name="Malone J.G."/>
            <person name="Robinson Z."/>
            <person name="Spiers A.J."/>
            <person name="Harris S."/>
            <person name="Challis G.L."/>
            <person name="Yaxley A.M."/>
            <person name="Harris D."/>
            <person name="Seeger K."/>
            <person name="Murphy L."/>
            <person name="Rutter S."/>
            <person name="Squares R."/>
            <person name="Quail M.A."/>
            <person name="Saunders E."/>
            <person name="Mavromatis K."/>
            <person name="Brettin T.S."/>
            <person name="Bentley S.D."/>
            <person name="Hothersall J."/>
            <person name="Stephens E."/>
            <person name="Thomas C.M."/>
            <person name="Parkhill J."/>
            <person name="Levy S.B."/>
            <person name="Rainey P.B."/>
            <person name="Thomson N.R."/>
        </authorList>
    </citation>
    <scope>NUCLEOTIDE SEQUENCE [LARGE SCALE GENOMIC DNA]</scope>
    <source>
        <strain>SBW25</strain>
    </source>
</reference>
<proteinExistence type="inferred from homology"/>